<feature type="signal peptide" evidence="1">
    <location>
        <begin position="1"/>
        <end position="20"/>
    </location>
</feature>
<feature type="chain" id="PRO_0000341611" description="Pro-corazonin" evidence="2">
    <location>
        <begin position="21"/>
        <end position="161"/>
    </location>
</feature>
<feature type="peptide" id="PRO_0000341500" description="Corazonin">
    <location>
        <begin position="21"/>
        <end position="31"/>
    </location>
</feature>
<feature type="peptide" id="PRO_0000341501" description="Corazonin precursor-related peptide">
    <location>
        <begin position="35"/>
        <end position="67"/>
    </location>
</feature>
<feature type="propeptide" id="PRO_0000341502" evidence="1">
    <location>
        <begin position="70"/>
        <end position="161"/>
    </location>
</feature>
<feature type="region of interest" description="Disordered" evidence="3">
    <location>
        <begin position="93"/>
        <end position="125"/>
    </location>
</feature>
<feature type="region of interest" description="Disordered" evidence="3">
    <location>
        <begin position="142"/>
        <end position="161"/>
    </location>
</feature>
<feature type="compositionally biased region" description="Low complexity" evidence="3">
    <location>
        <begin position="102"/>
        <end position="117"/>
    </location>
</feature>
<feature type="modified residue" description="Pyrrolidone carboxylic acid" evidence="1">
    <location>
        <position position="21"/>
    </location>
</feature>
<feature type="modified residue" description="Asparagine amide" evidence="1">
    <location>
        <position position="31"/>
    </location>
</feature>
<keyword id="KW-0027">Amidation</keyword>
<keyword id="KW-0165">Cleavage on pair of basic residues</keyword>
<keyword id="KW-0527">Neuropeptide</keyword>
<keyword id="KW-0873">Pyrrolidone carboxylic acid</keyword>
<keyword id="KW-1185">Reference proteome</keyword>
<keyword id="KW-0964">Secreted</keyword>
<keyword id="KW-0732">Signal</keyword>
<organism>
    <name type="scientific">Drosophila pseudoobscura pseudoobscura</name>
    <name type="common">Fruit fly</name>
    <dbReference type="NCBI Taxonomy" id="46245"/>
    <lineage>
        <taxon>Eukaryota</taxon>
        <taxon>Metazoa</taxon>
        <taxon>Ecdysozoa</taxon>
        <taxon>Arthropoda</taxon>
        <taxon>Hexapoda</taxon>
        <taxon>Insecta</taxon>
        <taxon>Pterygota</taxon>
        <taxon>Neoptera</taxon>
        <taxon>Endopterygota</taxon>
        <taxon>Diptera</taxon>
        <taxon>Brachycera</taxon>
        <taxon>Muscomorpha</taxon>
        <taxon>Ephydroidea</taxon>
        <taxon>Drosophilidae</taxon>
        <taxon>Drosophila</taxon>
        <taxon>Sophophora</taxon>
    </lineage>
</organism>
<evidence type="ECO:0000250" key="1">
    <source>
        <dbReference type="UniProtKB" id="Q26377"/>
    </source>
</evidence>
<evidence type="ECO:0000255" key="2"/>
<evidence type="ECO:0000256" key="3">
    <source>
        <dbReference type="SAM" id="MobiDB-lite"/>
    </source>
</evidence>
<evidence type="ECO:0000305" key="4"/>
<evidence type="ECO:0000312" key="5">
    <source>
        <dbReference type="EMBL" id="EAL27793.1"/>
    </source>
</evidence>
<sequence>MMRLLLLPLFLFTLSMACMGQTFQYSRGWTNGKRALTPPSLLSHGHFNRASDLGFSDLYDVQDWSSERRLERCLAQLQRSLLSRVYGSVVDFNANRPEPDSSDSGSSRNRANNNNENVLYPTPIQNRHHSSNELLEEISAAVAGSGPTGAGSGEPSVFGKH</sequence>
<dbReference type="EMBL" id="CM000070">
    <property type="protein sequence ID" value="EAL27793.1"/>
    <property type="status" value="ALT_SEQ"/>
    <property type="molecule type" value="Genomic_DNA"/>
</dbReference>
<dbReference type="RefSeq" id="XP_001358652.1">
    <property type="nucleotide sequence ID" value="XM_001358615.3"/>
</dbReference>
<dbReference type="FunCoup" id="Q299B0">
    <property type="interactions" value="82"/>
</dbReference>
<dbReference type="STRING" id="46245.Q299B0"/>
<dbReference type="EnsemblMetazoa" id="FBtr0285443">
    <property type="protein sequence ID" value="FBpp0283881"/>
    <property type="gene ID" value="FBgn0077255"/>
</dbReference>
<dbReference type="GeneID" id="4801582"/>
<dbReference type="KEGG" id="dpo:4801582"/>
<dbReference type="CTD" id="12973"/>
<dbReference type="eggNOG" id="ENOG502T821">
    <property type="taxonomic scope" value="Eukaryota"/>
</dbReference>
<dbReference type="HOGENOM" id="CLU_1679760_0_0_1"/>
<dbReference type="InParanoid" id="Q299B0"/>
<dbReference type="OMA" id="RHRQSNE"/>
<dbReference type="PhylomeDB" id="Q299B0"/>
<dbReference type="Proteomes" id="UP000001819">
    <property type="component" value="Chromosome 2"/>
</dbReference>
<dbReference type="Bgee" id="FBgn0077255">
    <property type="expression patterns" value="Expressed in insect adult head"/>
</dbReference>
<dbReference type="GO" id="GO:0005576">
    <property type="term" value="C:extracellular region"/>
    <property type="evidence" value="ECO:0000250"/>
    <property type="project" value="UniProtKB"/>
</dbReference>
<dbReference type="GO" id="GO:0071858">
    <property type="term" value="F:corazonin receptor binding"/>
    <property type="evidence" value="ECO:0007669"/>
    <property type="project" value="InterPro"/>
</dbReference>
<dbReference type="GO" id="GO:0005184">
    <property type="term" value="F:neuropeptide hormone activity"/>
    <property type="evidence" value="ECO:0000250"/>
    <property type="project" value="UniProtKB"/>
</dbReference>
<dbReference type="GO" id="GO:0007218">
    <property type="term" value="P:neuropeptide signaling pathway"/>
    <property type="evidence" value="ECO:0007669"/>
    <property type="project" value="UniProtKB-KW"/>
</dbReference>
<dbReference type="GO" id="GO:0045823">
    <property type="term" value="P:positive regulation of heart contraction"/>
    <property type="evidence" value="ECO:0000250"/>
    <property type="project" value="UniProtKB"/>
</dbReference>
<dbReference type="InterPro" id="IPR020190">
    <property type="entry name" value="Procorazonin"/>
</dbReference>
<dbReference type="Pfam" id="PF17308">
    <property type="entry name" value="Corazonin"/>
    <property type="match status" value="1"/>
</dbReference>
<name>CORZ_DROPS</name>
<protein>
    <recommendedName>
        <fullName>Pro-corazonin</fullName>
        <shortName>Crz</shortName>
        <shortName>Dp-Crz</shortName>
    </recommendedName>
    <component>
        <recommendedName>
            <fullName>Corazonin</fullName>
        </recommendedName>
    </component>
    <component>
        <recommendedName>
            <fullName>Corazonin precursor-related peptide</fullName>
            <shortName>CPRP</shortName>
        </recommendedName>
    </component>
</protein>
<reference evidence="5" key="1">
    <citation type="journal article" date="2005" name="Genome Res.">
        <title>Comparative genome sequencing of Drosophila pseudoobscura: chromosomal, gene, and cis-element evolution.</title>
        <authorList>
            <person name="Richards S."/>
            <person name="Liu Y."/>
            <person name="Bettencourt B.R."/>
            <person name="Hradecky P."/>
            <person name="Letovsky S."/>
            <person name="Nielsen R."/>
            <person name="Thornton K."/>
            <person name="Hubisz M.J."/>
            <person name="Chen R."/>
            <person name="Meisel R.P."/>
            <person name="Couronne O."/>
            <person name="Hua S."/>
            <person name="Smith M.A."/>
            <person name="Zhang P."/>
            <person name="Liu J."/>
            <person name="Bussemaker H.J."/>
            <person name="van Batenburg M.F."/>
            <person name="Howells S.L."/>
            <person name="Scherer S.E."/>
            <person name="Sodergren E."/>
            <person name="Matthews B.B."/>
            <person name="Crosby M.A."/>
            <person name="Schroeder A.J."/>
            <person name="Ortiz-Barrientos D."/>
            <person name="Rives C.M."/>
            <person name="Metzker M.L."/>
            <person name="Muzny D.M."/>
            <person name="Scott G."/>
            <person name="Steffen D."/>
            <person name="Wheeler D.A."/>
            <person name="Worley K.C."/>
            <person name="Havlak P."/>
            <person name="Durbin K.J."/>
            <person name="Egan A."/>
            <person name="Gill R."/>
            <person name="Hume J."/>
            <person name="Morgan M.B."/>
            <person name="Miner G."/>
            <person name="Hamilton C."/>
            <person name="Huang Y."/>
            <person name="Waldron L."/>
            <person name="Verduzco D."/>
            <person name="Clerc-Blankenburg K.P."/>
            <person name="Dubchak I."/>
            <person name="Noor M.A.F."/>
            <person name="Anderson W."/>
            <person name="White K.P."/>
            <person name="Clark A.G."/>
            <person name="Schaeffer S.W."/>
            <person name="Gelbart W.M."/>
            <person name="Weinstock G.M."/>
            <person name="Gibbs R.A."/>
        </authorList>
    </citation>
    <scope>NUCLEOTIDE SEQUENCE [LARGE SCALE GENOMIC DNA]</scope>
    <source>
        <strain>MV2-25 / Tucson 14011-0121.94</strain>
    </source>
</reference>
<accession>Q299B0</accession>
<proteinExistence type="inferred from homology"/>
<comment type="function">
    <text evidence="1">Cardioactive peptide. Corazonin is probably involved in the physiological regulation of the heart beat. Clock (Clk) and cycle (cyc) proteins negatively regulate Crz transcription in a cell-specific manner (By similarity).</text>
</comment>
<comment type="subcellular location">
    <molecule>Corazonin</molecule>
    <subcellularLocation>
        <location evidence="1">Secreted</location>
    </subcellularLocation>
</comment>
<comment type="subcellular location">
    <molecule>Corazonin precursor-related peptide</molecule>
    <subcellularLocation>
        <location evidence="1">Secreted</location>
    </subcellularLocation>
</comment>
<comment type="similarity">
    <text evidence="4">Belongs to the corazonin family.</text>
</comment>
<comment type="sequence caution" evidence="4">
    <conflict type="erroneous gene model prediction">
        <sequence resource="EMBL-CDS" id="EAL27793"/>
    </conflict>
</comment>
<gene>
    <name evidence="1" type="primary">Crz</name>
    <name type="ORF">GA17242</name>
</gene>